<evidence type="ECO:0000250" key="1"/>
<evidence type="ECO:0000250" key="2">
    <source>
        <dbReference type="UniProtKB" id="P04413"/>
    </source>
</evidence>
<evidence type="ECO:0000255" key="3">
    <source>
        <dbReference type="PROSITE-ProRule" id="PRU00159"/>
    </source>
</evidence>
<evidence type="ECO:0000255" key="4">
    <source>
        <dbReference type="PROSITE-ProRule" id="PRU10027"/>
    </source>
</evidence>
<evidence type="ECO:0000256" key="5">
    <source>
        <dbReference type="SAM" id="MobiDB-lite"/>
    </source>
</evidence>
<evidence type="ECO:0000269" key="6">
    <source>
    </source>
</evidence>
<keyword id="KW-0067">ATP-binding</keyword>
<keyword id="KW-1035">Host cytoplasm</keyword>
<keyword id="KW-1048">Host nucleus</keyword>
<keyword id="KW-0945">Host-virus interaction</keyword>
<keyword id="KW-0418">Kinase</keyword>
<keyword id="KW-1119">Modulation of host cell apoptosis by virus</keyword>
<keyword id="KW-1122">Modulation of host chromatin by virus</keyword>
<keyword id="KW-0547">Nucleotide-binding</keyword>
<keyword id="KW-1185">Reference proteome</keyword>
<keyword id="KW-0723">Serine/threonine-protein kinase</keyword>
<keyword id="KW-0808">Transferase</keyword>
<feature type="chain" id="PRO_0000086181" description="Serine/threonine-protein kinase US3">
    <location>
        <begin position="1"/>
        <end position="481"/>
    </location>
</feature>
<feature type="domain" description="Protein kinase" evidence="3">
    <location>
        <begin position="191"/>
        <end position="478"/>
    </location>
</feature>
<feature type="region of interest" description="Disordered" evidence="5">
    <location>
        <begin position="12"/>
        <end position="63"/>
    </location>
</feature>
<feature type="compositionally biased region" description="Pro residues" evidence="5">
    <location>
        <begin position="47"/>
        <end position="61"/>
    </location>
</feature>
<feature type="active site" description="Proton acceptor" evidence="3 4">
    <location>
        <position position="305"/>
    </location>
</feature>
<feature type="binding site" evidence="3">
    <location>
        <begin position="197"/>
        <end position="205"/>
    </location>
    <ligand>
        <name>ATP</name>
        <dbReference type="ChEBI" id="CHEBI:30616"/>
    </ligand>
</feature>
<feature type="binding site" evidence="3">
    <location>
        <position position="220"/>
    </location>
    <ligand>
        <name>ATP</name>
        <dbReference type="ChEBI" id="CHEBI:30616"/>
    </ligand>
</feature>
<accession>P13287</accession>
<organism>
    <name type="scientific">Human herpesvirus 2 (strain HG52)</name>
    <name type="common">HHV-2</name>
    <name type="synonym">Human herpes simplex virus 2</name>
    <dbReference type="NCBI Taxonomy" id="10315"/>
    <lineage>
        <taxon>Viruses</taxon>
        <taxon>Duplodnaviria</taxon>
        <taxon>Heunggongvirae</taxon>
        <taxon>Peploviricota</taxon>
        <taxon>Herviviricetes</taxon>
        <taxon>Herpesvirales</taxon>
        <taxon>Orthoherpesviridae</taxon>
        <taxon>Alphaherpesvirinae</taxon>
        <taxon>Simplexvirus</taxon>
        <taxon>Simplexvirus humanalpha2</taxon>
        <taxon>Human herpesvirus 2</taxon>
    </lineage>
</organism>
<proteinExistence type="inferred from homology"/>
<name>US03_HHV2H</name>
<comment type="function">
    <text evidence="2">Multifunctional serine/threonine kinase that plays a role in several processes including egress of virus particles from the nucleus, modulation of the actin cytoskeleton and inhibition of host immune response. Phosphorylates UL31 and UL34, two critical regulators of capsid budding from nucleus to endoplasmic reticulum, thereby facilitating virion egress. Modulates and redistributes host components of the nuclear envelope, including LMNA, emerin/EMD and the nuclear matrix protein MATR3. In turn, facilitates nuclear pore impairment and capsid release through impaired nuclear envelope. Phosphorylates envelope glycoprotein B (gB), probably to direct it to the cell surface. Promotes virus intracellular spread by restructuring host cell cytoskeleton. Blocks host apoptosis to extend cell survival and allow efficient viral replication. Promotes viral gene expression by phosphorylating host HDAC2 to reduce viral genome silencing. Strongly inhibits TCR-activated signal transduction in T-cells by reducing the ubiquitination of LAT and TRAF6, leading to a suboptimal activation of LAT. Subverts host antiviral innate immunity by inhibiting type I interferon production through hyperphosphorylation of beta-catenin/CTNNB1. In addition, phosphorylates the RNA sensor RIGI and the transcription factor IRF3 to prevent the RLR-mediated antiviral signaling pathway. Hyperphosphorylates host RELA and thereby dampens NF-kappa-B signaling. Acts as an immunoevasin partly responsible for inhibition of MR1 expression and antigen presentation in response to bacterial infection.</text>
</comment>
<comment type="catalytic activity">
    <reaction>
        <text>L-seryl-[protein] + ATP = O-phospho-L-seryl-[protein] + ADP + H(+)</text>
        <dbReference type="Rhea" id="RHEA:17989"/>
        <dbReference type="Rhea" id="RHEA-COMP:9863"/>
        <dbReference type="Rhea" id="RHEA-COMP:11604"/>
        <dbReference type="ChEBI" id="CHEBI:15378"/>
        <dbReference type="ChEBI" id="CHEBI:29999"/>
        <dbReference type="ChEBI" id="CHEBI:30616"/>
        <dbReference type="ChEBI" id="CHEBI:83421"/>
        <dbReference type="ChEBI" id="CHEBI:456216"/>
        <dbReference type="EC" id="2.7.11.1"/>
    </reaction>
</comment>
<comment type="catalytic activity">
    <reaction>
        <text>L-threonyl-[protein] + ATP = O-phospho-L-threonyl-[protein] + ADP + H(+)</text>
        <dbReference type="Rhea" id="RHEA:46608"/>
        <dbReference type="Rhea" id="RHEA-COMP:11060"/>
        <dbReference type="Rhea" id="RHEA-COMP:11605"/>
        <dbReference type="ChEBI" id="CHEBI:15378"/>
        <dbReference type="ChEBI" id="CHEBI:30013"/>
        <dbReference type="ChEBI" id="CHEBI:30616"/>
        <dbReference type="ChEBI" id="CHEBI:61977"/>
        <dbReference type="ChEBI" id="CHEBI:456216"/>
        <dbReference type="EC" id="2.7.11.1"/>
    </reaction>
</comment>
<comment type="subunit">
    <text evidence="2">Interacts with host LAT; this interaction prevents LAT activation of TRAF6.</text>
</comment>
<comment type="subcellular location">
    <subcellularLocation>
        <location evidence="6">Host cytoplasm</location>
    </subcellularLocation>
    <subcellularLocation>
        <location evidence="6">Host nucleus</location>
    </subcellularLocation>
</comment>
<comment type="PTM">
    <text evidence="1">Phosphorylated by UL13; this phosphorylation regulates subsequent phosphorylation of UL31 and UL34 by US3. Autophosphorylated (By similarity).</text>
</comment>
<comment type="similarity">
    <text evidence="3">Belongs to the protein kinase superfamily. Ser/Thr protein kinase family.</text>
</comment>
<dbReference type="EC" id="2.7.11.1"/>
<dbReference type="EMBL" id="X04798">
    <property type="protein sequence ID" value="CAA28489.1"/>
    <property type="molecule type" value="Genomic_DNA"/>
</dbReference>
<dbReference type="EMBL" id="Z86099">
    <property type="protein sequence ID" value="CAB06710.1"/>
    <property type="molecule type" value="Genomic_DNA"/>
</dbReference>
<dbReference type="PIR" id="B43674">
    <property type="entry name" value="B43674"/>
</dbReference>
<dbReference type="SMR" id="P13287"/>
<dbReference type="Proteomes" id="UP000001874">
    <property type="component" value="Segment"/>
</dbReference>
<dbReference type="GO" id="GO:0030430">
    <property type="term" value="C:host cell cytoplasm"/>
    <property type="evidence" value="ECO:0007669"/>
    <property type="project" value="UniProtKB-SubCell"/>
</dbReference>
<dbReference type="GO" id="GO:0042025">
    <property type="term" value="C:host cell nucleus"/>
    <property type="evidence" value="ECO:0007669"/>
    <property type="project" value="UniProtKB-SubCell"/>
</dbReference>
<dbReference type="GO" id="GO:0005524">
    <property type="term" value="F:ATP binding"/>
    <property type="evidence" value="ECO:0007669"/>
    <property type="project" value="UniProtKB-KW"/>
</dbReference>
<dbReference type="GO" id="GO:0106310">
    <property type="term" value="F:protein serine kinase activity"/>
    <property type="evidence" value="ECO:0007669"/>
    <property type="project" value="RHEA"/>
</dbReference>
<dbReference type="GO" id="GO:0004674">
    <property type="term" value="F:protein serine/threonine kinase activity"/>
    <property type="evidence" value="ECO:0007669"/>
    <property type="project" value="UniProtKB-KW"/>
</dbReference>
<dbReference type="GO" id="GO:0052150">
    <property type="term" value="P:symbiont-mediated perturbation of host apoptosis"/>
    <property type="evidence" value="ECO:0007669"/>
    <property type="project" value="UniProtKB-KW"/>
</dbReference>
<dbReference type="GO" id="GO:0039525">
    <property type="term" value="P:symbiont-mediated perturbation of host chromatin organization"/>
    <property type="evidence" value="ECO:0007669"/>
    <property type="project" value="UniProtKB-KW"/>
</dbReference>
<dbReference type="CDD" id="cd00180">
    <property type="entry name" value="PKc"/>
    <property type="match status" value="1"/>
</dbReference>
<dbReference type="Gene3D" id="1.10.510.10">
    <property type="entry name" value="Transferase(Phosphotransferase) domain 1"/>
    <property type="match status" value="1"/>
</dbReference>
<dbReference type="InterPro" id="IPR011009">
    <property type="entry name" value="Kinase-like_dom_sf"/>
</dbReference>
<dbReference type="InterPro" id="IPR050660">
    <property type="entry name" value="NEK_Ser/Thr_kinase"/>
</dbReference>
<dbReference type="InterPro" id="IPR000719">
    <property type="entry name" value="Prot_kinase_dom"/>
</dbReference>
<dbReference type="InterPro" id="IPR008271">
    <property type="entry name" value="Ser/Thr_kinase_AS"/>
</dbReference>
<dbReference type="PANTHER" id="PTHR43671:SF103">
    <property type="entry name" value="KINASE, PUTATIVE-RELATED"/>
    <property type="match status" value="1"/>
</dbReference>
<dbReference type="PANTHER" id="PTHR43671">
    <property type="entry name" value="SERINE/THREONINE-PROTEIN KINASE NEK"/>
    <property type="match status" value="1"/>
</dbReference>
<dbReference type="Pfam" id="PF00069">
    <property type="entry name" value="Pkinase"/>
    <property type="match status" value="1"/>
</dbReference>
<dbReference type="SMART" id="SM00220">
    <property type="entry name" value="S_TKc"/>
    <property type="match status" value="1"/>
</dbReference>
<dbReference type="SUPFAM" id="SSF56112">
    <property type="entry name" value="Protein kinase-like (PK-like)"/>
    <property type="match status" value="1"/>
</dbReference>
<dbReference type="PROSITE" id="PS50011">
    <property type="entry name" value="PROTEIN_KINASE_DOM"/>
    <property type="match status" value="1"/>
</dbReference>
<dbReference type="PROSITE" id="PS00108">
    <property type="entry name" value="PROTEIN_KINASE_ST"/>
    <property type="match status" value="1"/>
</dbReference>
<protein>
    <recommendedName>
        <fullName>Serine/threonine-protein kinase US3</fullName>
        <ecNumber>2.7.11.1</ecNumber>
    </recommendedName>
</protein>
<sequence length="481" mass="52678">MACRKFCGVYRRPDKRQEASVPPETNTAPAFPASTFYTPAEDAYLAPGPPETIHPSRPPSPGEAARLCQLQEILAQMHSDEDYPIVDAAGAEEEDEADDDAPDDVAYPEDYAEGRFLSMVSAAPLPGASGHPPVPGRAAPPDVRTCDTGKVGATGFTPEELDTMDREALRAISRGCKPPSTLAKLVTGLGFAIHGALIPGSEGCVFDSSHPNYPHRVIVKAGWYASTSHEARLLRRLNHPAILPLLDLHVVSGVTCLVLPKYHCDLYTYLSKRPSPLGHLQITAVSRQLLSAIDYVHCKGIIHRDIKTENIFINTPENICLGDFGAACFVRGCRSSPFHYGIAGTIDTNAPEVLAGDPYTQVIDIWSAGLVIFETAVHTASLFSAPRDPERRPCDNQIARIIRQAQVHVDEFPTHAESRLTAHYRSRAAGNNRPAWTRPAWTRYYKIHTDVEYLICKALTFDAALRPSAAELLRLPLFHPK</sequence>
<gene>
    <name type="primary">US3</name>
</gene>
<organismHost>
    <name type="scientific">Homo sapiens</name>
    <name type="common">Human</name>
    <dbReference type="NCBI Taxonomy" id="9606"/>
</organismHost>
<reference key="1">
    <citation type="journal article" date="1987" name="J. Gen. Virol.">
        <title>DNA sequence and genetic content of the HindIII l region in the short unique component of the herpes simplex virus type 2 genome: identification of the gene encoding glycoprotein G, and evolutionary comparisons.</title>
        <authorList>
            <person name="McGeoch D.J."/>
            <person name="Moss H.W.M."/>
            <person name="McNab D."/>
            <person name="Frame M.C."/>
        </authorList>
    </citation>
    <scope>NUCLEOTIDE SEQUENCE [GENOMIC DNA]</scope>
</reference>
<reference key="2">
    <citation type="journal article" date="1998" name="J. Virol.">
        <title>The genome sequence of herpes simplex virus type 2.</title>
        <authorList>
            <person name="Dolan A."/>
            <person name="Jamieson F.E."/>
            <person name="Cunningham C."/>
            <person name="Barnett B.C."/>
            <person name="McGeoch D.J."/>
        </authorList>
    </citation>
    <scope>NUCLEOTIDE SEQUENCE [LARGE SCALE GENOMIC DNA]</scope>
</reference>
<reference key="3">
    <citation type="journal article" date="1988" name="Trends Biochem. Sci.">
        <title>The herpesvirus protein kinase: a new departure in protein phosphorylation?</title>
        <authorList>
            <person name="Leader D.P."/>
            <person name="Purves F.C."/>
        </authorList>
    </citation>
    <scope>REVIEW</scope>
</reference>
<reference key="4">
    <citation type="journal article" date="2010" name="Virology">
        <title>Analysis of filamentous process induction and nuclear localization properties of the HSV-2 serine/threonine kinase Us3.</title>
        <authorList>
            <person name="Finnen R.L."/>
            <person name="Roy B.B."/>
            <person name="Zhang H."/>
            <person name="Banfield B.W."/>
        </authorList>
    </citation>
    <scope>SUBCELLULAR LOCATION</scope>
</reference>